<name>GHRA_ECO7I</name>
<gene>
    <name evidence="1" type="primary">ghrA</name>
    <name type="ordered locus">ECIAI39_2130</name>
</gene>
<organism>
    <name type="scientific">Escherichia coli O7:K1 (strain IAI39 / ExPEC)</name>
    <dbReference type="NCBI Taxonomy" id="585057"/>
    <lineage>
        <taxon>Bacteria</taxon>
        <taxon>Pseudomonadati</taxon>
        <taxon>Pseudomonadota</taxon>
        <taxon>Gammaproteobacteria</taxon>
        <taxon>Enterobacterales</taxon>
        <taxon>Enterobacteriaceae</taxon>
        <taxon>Escherichia</taxon>
    </lineage>
</organism>
<keyword id="KW-0963">Cytoplasm</keyword>
<keyword id="KW-0520">NAD</keyword>
<keyword id="KW-0521">NADP</keyword>
<keyword id="KW-0560">Oxidoreductase</keyword>
<accession>B7NLA1</accession>
<comment type="function">
    <text evidence="1">Catalyzes the NADPH-dependent reduction of glyoxylate and hydroxypyruvate into glycolate and glycerate, respectively.</text>
</comment>
<comment type="catalytic activity">
    <reaction evidence="1">
        <text>glycolate + NADP(+) = glyoxylate + NADPH + H(+)</text>
        <dbReference type="Rhea" id="RHEA:10992"/>
        <dbReference type="ChEBI" id="CHEBI:15378"/>
        <dbReference type="ChEBI" id="CHEBI:29805"/>
        <dbReference type="ChEBI" id="CHEBI:36655"/>
        <dbReference type="ChEBI" id="CHEBI:57783"/>
        <dbReference type="ChEBI" id="CHEBI:58349"/>
        <dbReference type="EC" id="1.1.1.79"/>
    </reaction>
</comment>
<comment type="catalytic activity">
    <reaction evidence="1">
        <text>(R)-glycerate + NAD(+) = 3-hydroxypyruvate + NADH + H(+)</text>
        <dbReference type="Rhea" id="RHEA:17905"/>
        <dbReference type="ChEBI" id="CHEBI:15378"/>
        <dbReference type="ChEBI" id="CHEBI:16659"/>
        <dbReference type="ChEBI" id="CHEBI:17180"/>
        <dbReference type="ChEBI" id="CHEBI:57540"/>
        <dbReference type="ChEBI" id="CHEBI:57945"/>
        <dbReference type="EC" id="1.1.1.81"/>
    </reaction>
</comment>
<comment type="catalytic activity">
    <reaction evidence="1">
        <text>(R)-glycerate + NADP(+) = 3-hydroxypyruvate + NADPH + H(+)</text>
        <dbReference type="Rhea" id="RHEA:18657"/>
        <dbReference type="ChEBI" id="CHEBI:15378"/>
        <dbReference type="ChEBI" id="CHEBI:16659"/>
        <dbReference type="ChEBI" id="CHEBI:17180"/>
        <dbReference type="ChEBI" id="CHEBI:57783"/>
        <dbReference type="ChEBI" id="CHEBI:58349"/>
        <dbReference type="EC" id="1.1.1.81"/>
    </reaction>
</comment>
<comment type="subcellular location">
    <subcellularLocation>
        <location evidence="1">Cytoplasm</location>
    </subcellularLocation>
</comment>
<comment type="similarity">
    <text evidence="1">Belongs to the D-isomer specific 2-hydroxyacid dehydrogenase family. GhrA subfamily.</text>
</comment>
<feature type="chain" id="PRO_1000187266" description="Glyoxylate/hydroxypyruvate reductase A">
    <location>
        <begin position="1"/>
        <end position="312"/>
    </location>
</feature>
<feature type="active site" evidence="1">
    <location>
        <position position="227"/>
    </location>
</feature>
<feature type="active site" description="Proton donor" evidence="1">
    <location>
        <position position="275"/>
    </location>
</feature>
<reference key="1">
    <citation type="journal article" date="2009" name="PLoS Genet.">
        <title>Organised genome dynamics in the Escherichia coli species results in highly diverse adaptive paths.</title>
        <authorList>
            <person name="Touchon M."/>
            <person name="Hoede C."/>
            <person name="Tenaillon O."/>
            <person name="Barbe V."/>
            <person name="Baeriswyl S."/>
            <person name="Bidet P."/>
            <person name="Bingen E."/>
            <person name="Bonacorsi S."/>
            <person name="Bouchier C."/>
            <person name="Bouvet O."/>
            <person name="Calteau A."/>
            <person name="Chiapello H."/>
            <person name="Clermont O."/>
            <person name="Cruveiller S."/>
            <person name="Danchin A."/>
            <person name="Diard M."/>
            <person name="Dossat C."/>
            <person name="Karoui M.E."/>
            <person name="Frapy E."/>
            <person name="Garry L."/>
            <person name="Ghigo J.M."/>
            <person name="Gilles A.M."/>
            <person name="Johnson J."/>
            <person name="Le Bouguenec C."/>
            <person name="Lescat M."/>
            <person name="Mangenot S."/>
            <person name="Martinez-Jehanne V."/>
            <person name="Matic I."/>
            <person name="Nassif X."/>
            <person name="Oztas S."/>
            <person name="Petit M.A."/>
            <person name="Pichon C."/>
            <person name="Rouy Z."/>
            <person name="Ruf C.S."/>
            <person name="Schneider D."/>
            <person name="Tourret J."/>
            <person name="Vacherie B."/>
            <person name="Vallenet D."/>
            <person name="Medigue C."/>
            <person name="Rocha E.P.C."/>
            <person name="Denamur E."/>
        </authorList>
    </citation>
    <scope>NUCLEOTIDE SEQUENCE [LARGE SCALE GENOMIC DNA]</scope>
    <source>
        <strain>IAI39 / ExPEC</strain>
    </source>
</reference>
<proteinExistence type="inferred from homology"/>
<evidence type="ECO:0000255" key="1">
    <source>
        <dbReference type="HAMAP-Rule" id="MF_01666"/>
    </source>
</evidence>
<sequence length="312" mass="35260">MDIIFYHPTFDTQWWIEVLRKAIPQARVRAWKSGDNDSADYALVWHPPVEMLAGRDLKAVFALGAGVDSILSKLQAHPEMLKPSVPLFRLEDTGMGEQMQEYAVSQVLHWFRRFDDYRIQQNSSHWQPLPEYHREDFTIGILGAGVLGSKVAQSLQTWRFPLRCWSRTRKSWPGVQSFAGREELSAFLSQCRVLINLLPNTPATVGIINQQLLEKLPDGAYLLNLARGVHVVEDDLLAALDSGKVKGAMLDVFNREPLPPESPLWQHPRVTITPHVAAITCPAEAVDYISRTIAQLEKGERVCGQVDRARGY</sequence>
<dbReference type="EC" id="1.1.1.79" evidence="1"/>
<dbReference type="EC" id="1.1.1.81" evidence="1"/>
<dbReference type="EMBL" id="CU928164">
    <property type="protein sequence ID" value="CAR18257.1"/>
    <property type="molecule type" value="Genomic_DNA"/>
</dbReference>
<dbReference type="RefSeq" id="WP_000351335.1">
    <property type="nucleotide sequence ID" value="NC_011750.1"/>
</dbReference>
<dbReference type="RefSeq" id="YP_002408093.1">
    <property type="nucleotide sequence ID" value="NC_011750.1"/>
</dbReference>
<dbReference type="SMR" id="B7NLA1"/>
<dbReference type="STRING" id="585057.ECIAI39_2130"/>
<dbReference type="KEGG" id="ect:ECIAI39_2130"/>
<dbReference type="PATRIC" id="fig|585057.6.peg.2216"/>
<dbReference type="HOGENOM" id="CLU_019796_1_0_6"/>
<dbReference type="Proteomes" id="UP000000749">
    <property type="component" value="Chromosome"/>
</dbReference>
<dbReference type="GO" id="GO:0005829">
    <property type="term" value="C:cytosol"/>
    <property type="evidence" value="ECO:0007669"/>
    <property type="project" value="UniProtKB-ARBA"/>
</dbReference>
<dbReference type="GO" id="GO:0030267">
    <property type="term" value="F:glyoxylate reductase (NADPH) activity"/>
    <property type="evidence" value="ECO:0007669"/>
    <property type="project" value="UniProtKB-UniRule"/>
</dbReference>
<dbReference type="GO" id="GO:0008465">
    <property type="term" value="F:hydroxypyruvate reductase (NADH) activity"/>
    <property type="evidence" value="ECO:0007669"/>
    <property type="project" value="RHEA"/>
</dbReference>
<dbReference type="GO" id="GO:0120509">
    <property type="term" value="F:hydroxypyruvate reductase (NADPH) activity"/>
    <property type="evidence" value="ECO:0007669"/>
    <property type="project" value="RHEA"/>
</dbReference>
<dbReference type="GO" id="GO:0051287">
    <property type="term" value="F:NAD binding"/>
    <property type="evidence" value="ECO:0007669"/>
    <property type="project" value="InterPro"/>
</dbReference>
<dbReference type="CDD" id="cd12164">
    <property type="entry name" value="GDH_like_2"/>
    <property type="match status" value="1"/>
</dbReference>
<dbReference type="FunFam" id="3.40.50.720:FF:000110">
    <property type="entry name" value="Glyoxylate/hydroxypyruvate reductase A"/>
    <property type="match status" value="1"/>
</dbReference>
<dbReference type="Gene3D" id="3.40.50.720">
    <property type="entry name" value="NAD(P)-binding Rossmann-like Domain"/>
    <property type="match status" value="2"/>
</dbReference>
<dbReference type="HAMAP" id="MF_01666">
    <property type="entry name" value="2_Hacid_dh_C_GhrA"/>
    <property type="match status" value="1"/>
</dbReference>
<dbReference type="InterPro" id="IPR029753">
    <property type="entry name" value="D-isomer_DH_CS"/>
</dbReference>
<dbReference type="InterPro" id="IPR006140">
    <property type="entry name" value="D-isomer_DH_NAD-bd"/>
</dbReference>
<dbReference type="InterPro" id="IPR023514">
    <property type="entry name" value="GhrA_Enterobacterales"/>
</dbReference>
<dbReference type="InterPro" id="IPR036291">
    <property type="entry name" value="NAD(P)-bd_dom_sf"/>
</dbReference>
<dbReference type="NCBIfam" id="NF012013">
    <property type="entry name" value="PRK15469.1"/>
    <property type="match status" value="1"/>
</dbReference>
<dbReference type="PANTHER" id="PTHR43333">
    <property type="entry name" value="2-HACID_DH_C DOMAIN-CONTAINING PROTEIN"/>
    <property type="match status" value="1"/>
</dbReference>
<dbReference type="PANTHER" id="PTHR43333:SF1">
    <property type="entry name" value="D-ISOMER SPECIFIC 2-HYDROXYACID DEHYDROGENASE NAD-BINDING DOMAIN-CONTAINING PROTEIN"/>
    <property type="match status" value="1"/>
</dbReference>
<dbReference type="Pfam" id="PF02826">
    <property type="entry name" value="2-Hacid_dh_C"/>
    <property type="match status" value="1"/>
</dbReference>
<dbReference type="SUPFAM" id="SSF51735">
    <property type="entry name" value="NAD(P)-binding Rossmann-fold domains"/>
    <property type="match status" value="1"/>
</dbReference>
<dbReference type="PROSITE" id="PS00671">
    <property type="entry name" value="D_2_HYDROXYACID_DH_3"/>
    <property type="match status" value="1"/>
</dbReference>
<protein>
    <recommendedName>
        <fullName evidence="1">Glyoxylate/hydroxypyruvate reductase A</fullName>
        <ecNumber evidence="1">1.1.1.79</ecNumber>
        <ecNumber evidence="1">1.1.1.81</ecNumber>
    </recommendedName>
    <alternativeName>
        <fullName evidence="1">2-ketoacid reductase</fullName>
    </alternativeName>
</protein>